<reference key="1">
    <citation type="journal article" date="1989" name="Gene">
        <title>Cloning and analysis of the tomato nitrate reductase-encoding gene: protein domain structure and amino acid homologies in higher plants.</title>
        <authorList>
            <person name="Daniel-Vedele F."/>
            <person name="Dorbe M.F."/>
            <person name="Caboche M."/>
            <person name="Rouze P."/>
        </authorList>
    </citation>
    <scope>NUCLEOTIDE SEQUENCE [GENOMIC DNA]</scope>
    <source>
        <strain>cv. Manapal</strain>
        <tissue>Leaf</tissue>
    </source>
</reference>
<accession>P17570</accession>
<sequence length="911" mass="102453">MAASVENRQYTHLEPGLSGVGRTFKPRPDSPVRGCNFPPSSNHELPFQKKQNPPIYLDYSSSEDEDDDDEKNEYVQMIKKGKTELEPSIHDTRDEGTADNWIERNFSLIRLTGKHPFNSEPPLSRLMHHGFITPVPLHYVRNHGPVPKASWSDWTVEVTGLVKRPMKFTMDQLVNEFPSREFPVTLVCAGNRRKEQNMVKQTIGFNWGAAAVSTTVWRGVPLRALLKRCGVQSKKKGALNVCFEGSDVLPGGGGSKYGTSIKKEFAMDPSRDIIVAYMQNGEMLSPDHGFPVRMIIPGFIGGRMVKWLKRIVVTTQESESYYHYKDNRVLPPHVDAELANAEAWWYKPEYIINELNINSVITTPCHEEILPINAWTTQRPYTLRGYAYSGGGKKVTRVEVTLDGGETWSVCTLDHPEKPTKYGKYWCWCFWSLEVEVLDLLSAKEIAVRATDETLNTQPEKLIWNVMGMMNNCWFRVKMNVCKPHKGEIGIVFEHPTQPGNQSGGWMAKERHLEISAVAPPTLKKSISTPFMNTASKMYSMSEVRKHNSSDSAWIIVHGHIYDASRFLKDHPGGVDSILINAGTDCTEEFDAIHSDKAKKLLEDFRIGELITTGYTSDSSPNSSVHGSSSISSFLAPIKELVQTPTRSVALIPREKIPCKLVDKQSISHDVRKFKFALPSEDQVLGLPVGKHIFLCATVDDKLCMRAYTPTSTVDEVGFFELVVKIYFKGVHPKFPNGGQMSQHLDSLPIGAFLDVKGPLGHIEYQGKGNFLVHGKQKFAKKLAMIAGGTGITPVYQVMQSILKDPEDDTEMYVVYANRTEDDILLKDELDAWAEQVPNRVKVWYVVQESITQGWKYSTGFVTESILREHIPEPSHTTLALACGPPPMIQFAINPNLEKMGYDIKEELLVF</sequence>
<feature type="chain" id="PRO_0000166061" description="Nitrate reductase [NADH]">
    <location>
        <begin position="1"/>
        <end position="911"/>
    </location>
</feature>
<feature type="domain" description="Cytochrome b5 heme-binding" evidence="6">
    <location>
        <begin position="536"/>
        <end position="611"/>
    </location>
</feature>
<feature type="domain" description="FAD-binding FR-type" evidence="7">
    <location>
        <begin position="654"/>
        <end position="766"/>
    </location>
</feature>
<feature type="region of interest" description="Disordered" evidence="8">
    <location>
        <begin position="1"/>
        <end position="71"/>
    </location>
</feature>
<feature type="compositionally biased region" description="Polar residues" evidence="8">
    <location>
        <begin position="1"/>
        <end position="10"/>
    </location>
</feature>
<feature type="compositionally biased region" description="Acidic residues" evidence="8">
    <location>
        <begin position="61"/>
        <end position="71"/>
    </location>
</feature>
<feature type="binding site" evidence="4">
    <location>
        <position position="188"/>
    </location>
    <ligand>
        <name>Mo-molybdopterin</name>
        <dbReference type="ChEBI" id="CHEBI:71302"/>
    </ligand>
    <ligandPart>
        <name>Mo</name>
        <dbReference type="ChEBI" id="CHEBI:28685"/>
    </ligandPart>
</feature>
<feature type="binding site" description="axial binding residue" evidence="6">
    <location>
        <position position="571"/>
    </location>
    <ligand>
        <name>heme</name>
        <dbReference type="ChEBI" id="CHEBI:30413"/>
    </ligand>
    <ligandPart>
        <name>Fe</name>
        <dbReference type="ChEBI" id="CHEBI:18248"/>
    </ligandPart>
</feature>
<feature type="binding site" description="axial binding residue" evidence="6">
    <location>
        <position position="594"/>
    </location>
    <ligand>
        <name>heme</name>
        <dbReference type="ChEBI" id="CHEBI:30413"/>
    </ligand>
    <ligandPart>
        <name>Fe</name>
        <dbReference type="ChEBI" id="CHEBI:18248"/>
    </ligandPart>
</feature>
<feature type="binding site" evidence="2">
    <location>
        <begin position="706"/>
        <end position="709"/>
    </location>
    <ligand>
        <name>FAD</name>
        <dbReference type="ChEBI" id="CHEBI:57692"/>
    </ligand>
</feature>
<feature type="binding site" evidence="2">
    <location>
        <begin position="723"/>
        <end position="727"/>
    </location>
    <ligand>
        <name>FAD</name>
        <dbReference type="ChEBI" id="CHEBI:57692"/>
    </ligand>
</feature>
<feature type="binding site" evidence="3">
    <location>
        <position position="728"/>
    </location>
    <ligand>
        <name>FAD</name>
        <dbReference type="ChEBI" id="CHEBI:57692"/>
    </ligand>
</feature>
<feature type="binding site" evidence="2">
    <location>
        <position position="735"/>
    </location>
    <ligand>
        <name>FAD</name>
        <dbReference type="ChEBI" id="CHEBI:57692"/>
    </ligand>
</feature>
<feature type="binding site" evidence="2">
    <location>
        <begin position="740"/>
        <end position="742"/>
    </location>
    <ligand>
        <name>FAD</name>
        <dbReference type="ChEBI" id="CHEBI:57692"/>
    </ligand>
</feature>
<feature type="binding site" evidence="2">
    <location>
        <position position="793"/>
    </location>
    <ligand>
        <name>FAD</name>
        <dbReference type="ChEBI" id="CHEBI:57692"/>
    </ligand>
</feature>
<feature type="disulfide bond" description="Interchain" evidence="5">
    <location>
        <position position="427"/>
    </location>
</feature>
<organism>
    <name type="scientific">Solanum lycopersicum</name>
    <name type="common">Tomato</name>
    <name type="synonym">Lycopersicon esculentum</name>
    <dbReference type="NCBI Taxonomy" id="4081"/>
    <lineage>
        <taxon>Eukaryota</taxon>
        <taxon>Viridiplantae</taxon>
        <taxon>Streptophyta</taxon>
        <taxon>Embryophyta</taxon>
        <taxon>Tracheophyta</taxon>
        <taxon>Spermatophyta</taxon>
        <taxon>Magnoliopsida</taxon>
        <taxon>eudicotyledons</taxon>
        <taxon>Gunneridae</taxon>
        <taxon>Pentapetalae</taxon>
        <taxon>asterids</taxon>
        <taxon>lamiids</taxon>
        <taxon>Solanales</taxon>
        <taxon>Solanaceae</taxon>
        <taxon>Solanoideae</taxon>
        <taxon>Solaneae</taxon>
        <taxon>Solanum</taxon>
        <taxon>Solanum subgen. Lycopersicon</taxon>
    </lineage>
</organism>
<dbReference type="EC" id="1.7.1.1"/>
<dbReference type="EMBL" id="X14060">
    <property type="protein sequence ID" value="CAA32218.1"/>
    <property type="molecule type" value="Genomic_DNA"/>
</dbReference>
<dbReference type="PIR" id="JQ0373">
    <property type="entry name" value="RDTONH"/>
</dbReference>
<dbReference type="SMR" id="P17570"/>
<dbReference type="FunCoup" id="P17570">
    <property type="interactions" value="146"/>
</dbReference>
<dbReference type="STRING" id="4081.P17570"/>
<dbReference type="PaxDb" id="4081-Solyc11g013810.1.1"/>
<dbReference type="eggNOG" id="KOG0534">
    <property type="taxonomic scope" value="Eukaryota"/>
</dbReference>
<dbReference type="eggNOG" id="KOG0535">
    <property type="taxonomic scope" value="Eukaryota"/>
</dbReference>
<dbReference type="eggNOG" id="KOG0537">
    <property type="taxonomic scope" value="Eukaryota"/>
</dbReference>
<dbReference type="InParanoid" id="P17570"/>
<dbReference type="Proteomes" id="UP000004994">
    <property type="component" value="Unplaced"/>
</dbReference>
<dbReference type="ExpressionAtlas" id="P17570">
    <property type="expression patterns" value="baseline and differential"/>
</dbReference>
<dbReference type="GO" id="GO:0071949">
    <property type="term" value="F:FAD binding"/>
    <property type="evidence" value="ECO:0000250"/>
    <property type="project" value="UniProtKB"/>
</dbReference>
<dbReference type="GO" id="GO:0020037">
    <property type="term" value="F:heme binding"/>
    <property type="evidence" value="ECO:0007669"/>
    <property type="project" value="InterPro"/>
</dbReference>
<dbReference type="GO" id="GO:0030151">
    <property type="term" value="F:molybdenum ion binding"/>
    <property type="evidence" value="ECO:0000250"/>
    <property type="project" value="UniProtKB"/>
</dbReference>
<dbReference type="GO" id="GO:0043546">
    <property type="term" value="F:molybdopterin cofactor binding"/>
    <property type="evidence" value="ECO:0007669"/>
    <property type="project" value="InterPro"/>
</dbReference>
<dbReference type="GO" id="GO:0009703">
    <property type="term" value="F:nitrate reductase (NADH) activity"/>
    <property type="evidence" value="ECO:0000318"/>
    <property type="project" value="GO_Central"/>
</dbReference>
<dbReference type="GO" id="GO:0050464">
    <property type="term" value="F:nitrate reductase (NADPH) activity"/>
    <property type="evidence" value="ECO:0007669"/>
    <property type="project" value="InterPro"/>
</dbReference>
<dbReference type="GO" id="GO:0042128">
    <property type="term" value="P:nitrate assimilation"/>
    <property type="evidence" value="ECO:0000318"/>
    <property type="project" value="GO_Central"/>
</dbReference>
<dbReference type="GO" id="GO:0006809">
    <property type="term" value="P:nitric oxide biosynthetic process"/>
    <property type="evidence" value="ECO:0000318"/>
    <property type="project" value="GO_Central"/>
</dbReference>
<dbReference type="CDD" id="cd06183">
    <property type="entry name" value="cyt_b5_reduct_like"/>
    <property type="match status" value="1"/>
</dbReference>
<dbReference type="CDD" id="cd02112">
    <property type="entry name" value="eukary_NR_Moco"/>
    <property type="match status" value="1"/>
</dbReference>
<dbReference type="FunFam" id="2.40.30.10:FF:000021">
    <property type="entry name" value="NADH-cytochrome b5 reductase"/>
    <property type="match status" value="1"/>
</dbReference>
<dbReference type="FunFam" id="2.60.40.650:FF:000001">
    <property type="entry name" value="Nitrate reductase"/>
    <property type="match status" value="1"/>
</dbReference>
<dbReference type="FunFam" id="3.10.120.10:FF:000008">
    <property type="entry name" value="Nitrate reductase"/>
    <property type="match status" value="1"/>
</dbReference>
<dbReference type="FunFam" id="3.90.420.10:FF:000003">
    <property type="entry name" value="Nitrate reductase"/>
    <property type="match status" value="1"/>
</dbReference>
<dbReference type="FunFam" id="3.40.50.80:FF:000025">
    <property type="entry name" value="Nitrate reductase [NADH]"/>
    <property type="match status" value="1"/>
</dbReference>
<dbReference type="Gene3D" id="2.60.40.650">
    <property type="match status" value="1"/>
</dbReference>
<dbReference type="Gene3D" id="3.10.120.10">
    <property type="entry name" value="Cytochrome b5-like heme/steroid binding domain"/>
    <property type="match status" value="1"/>
</dbReference>
<dbReference type="Gene3D" id="3.40.50.80">
    <property type="entry name" value="Nucleotide-binding domain of ferredoxin-NADP reductase (FNR) module"/>
    <property type="match status" value="1"/>
</dbReference>
<dbReference type="Gene3D" id="3.90.420.10">
    <property type="entry name" value="Oxidoreductase, molybdopterin-binding domain"/>
    <property type="match status" value="1"/>
</dbReference>
<dbReference type="Gene3D" id="2.40.30.10">
    <property type="entry name" value="Translation factors"/>
    <property type="match status" value="1"/>
</dbReference>
<dbReference type="InterPro" id="IPR008333">
    <property type="entry name" value="Cbr1-like_FAD-bd_dom"/>
</dbReference>
<dbReference type="InterPro" id="IPR001199">
    <property type="entry name" value="Cyt_B5-like_heme/steroid-bd"/>
</dbReference>
<dbReference type="InterPro" id="IPR036400">
    <property type="entry name" value="Cyt_B5-like_heme/steroid_sf"/>
</dbReference>
<dbReference type="InterPro" id="IPR018506">
    <property type="entry name" value="Cyt_B5_heme-BS"/>
</dbReference>
<dbReference type="InterPro" id="IPR017927">
    <property type="entry name" value="FAD-bd_FR_type"/>
</dbReference>
<dbReference type="InterPro" id="IPR001709">
    <property type="entry name" value="Flavoprot_Pyr_Nucl_cyt_Rdtase"/>
</dbReference>
<dbReference type="InterPro" id="IPR039261">
    <property type="entry name" value="FNR_nucleotide-bd"/>
</dbReference>
<dbReference type="InterPro" id="IPR014756">
    <property type="entry name" value="Ig_E-set"/>
</dbReference>
<dbReference type="InterPro" id="IPR005066">
    <property type="entry name" value="MoCF_OxRdtse_dimer"/>
</dbReference>
<dbReference type="InterPro" id="IPR008335">
    <property type="entry name" value="Mopterin_OxRdtase_euk"/>
</dbReference>
<dbReference type="InterPro" id="IPR012137">
    <property type="entry name" value="Nitr_rd_NADH"/>
</dbReference>
<dbReference type="InterPro" id="IPR001433">
    <property type="entry name" value="OxRdtase_FAD/NAD-bd"/>
</dbReference>
<dbReference type="InterPro" id="IPR000572">
    <property type="entry name" value="OxRdtase_Mopterin-bd_dom"/>
</dbReference>
<dbReference type="InterPro" id="IPR036374">
    <property type="entry name" value="OxRdtase_Mopterin-bd_sf"/>
</dbReference>
<dbReference type="InterPro" id="IPR022407">
    <property type="entry name" value="OxRdtase_Mopterin_BS"/>
</dbReference>
<dbReference type="InterPro" id="IPR017938">
    <property type="entry name" value="Riboflavin_synthase-like_b-brl"/>
</dbReference>
<dbReference type="PANTHER" id="PTHR19372:SF7">
    <property type="entry name" value="SULFITE OXIDASE, MITOCHONDRIAL"/>
    <property type="match status" value="1"/>
</dbReference>
<dbReference type="PANTHER" id="PTHR19372">
    <property type="entry name" value="SULFITE REDUCTASE"/>
    <property type="match status" value="1"/>
</dbReference>
<dbReference type="Pfam" id="PF00173">
    <property type="entry name" value="Cyt-b5"/>
    <property type="match status" value="1"/>
</dbReference>
<dbReference type="Pfam" id="PF00970">
    <property type="entry name" value="FAD_binding_6"/>
    <property type="match status" value="1"/>
</dbReference>
<dbReference type="Pfam" id="PF03404">
    <property type="entry name" value="Mo-co_dimer"/>
    <property type="match status" value="1"/>
</dbReference>
<dbReference type="Pfam" id="PF00175">
    <property type="entry name" value="NAD_binding_1"/>
    <property type="match status" value="1"/>
</dbReference>
<dbReference type="Pfam" id="PF00174">
    <property type="entry name" value="Oxidored_molyb"/>
    <property type="match status" value="1"/>
</dbReference>
<dbReference type="PIRSF" id="PIRSF000233">
    <property type="entry name" value="Nitr_rd_NADH"/>
    <property type="match status" value="1"/>
</dbReference>
<dbReference type="PRINTS" id="PR00406">
    <property type="entry name" value="CYTB5RDTASE"/>
</dbReference>
<dbReference type="PRINTS" id="PR00363">
    <property type="entry name" value="CYTOCHROMEB5"/>
</dbReference>
<dbReference type="PRINTS" id="PR00407">
    <property type="entry name" value="EUMOPTERIN"/>
</dbReference>
<dbReference type="PRINTS" id="PR00371">
    <property type="entry name" value="FPNCR"/>
</dbReference>
<dbReference type="SMART" id="SM01117">
    <property type="entry name" value="Cyt-b5"/>
    <property type="match status" value="1"/>
</dbReference>
<dbReference type="SUPFAM" id="SSF55856">
    <property type="entry name" value="Cytochrome b5-like heme/steroid binding domain"/>
    <property type="match status" value="1"/>
</dbReference>
<dbReference type="SUPFAM" id="SSF81296">
    <property type="entry name" value="E set domains"/>
    <property type="match status" value="1"/>
</dbReference>
<dbReference type="SUPFAM" id="SSF52343">
    <property type="entry name" value="Ferredoxin reductase-like, C-terminal NADP-linked domain"/>
    <property type="match status" value="1"/>
</dbReference>
<dbReference type="SUPFAM" id="SSF56524">
    <property type="entry name" value="Oxidoreductase molybdopterin-binding domain"/>
    <property type="match status" value="1"/>
</dbReference>
<dbReference type="SUPFAM" id="SSF63380">
    <property type="entry name" value="Riboflavin synthase domain-like"/>
    <property type="match status" value="1"/>
</dbReference>
<dbReference type="PROSITE" id="PS00191">
    <property type="entry name" value="CYTOCHROME_B5_1"/>
    <property type="match status" value="1"/>
</dbReference>
<dbReference type="PROSITE" id="PS50255">
    <property type="entry name" value="CYTOCHROME_B5_2"/>
    <property type="match status" value="1"/>
</dbReference>
<dbReference type="PROSITE" id="PS51384">
    <property type="entry name" value="FAD_FR"/>
    <property type="match status" value="1"/>
</dbReference>
<dbReference type="PROSITE" id="PS00559">
    <property type="entry name" value="MOLYBDOPTERIN_EUK"/>
    <property type="match status" value="1"/>
</dbReference>
<protein>
    <recommendedName>
        <fullName>Nitrate reductase [NADH]</fullName>
        <shortName>NR</shortName>
        <ecNumber>1.7.1.1</ecNumber>
    </recommendedName>
</protein>
<keyword id="KW-1015">Disulfide bond</keyword>
<keyword id="KW-0274">FAD</keyword>
<keyword id="KW-0285">Flavoprotein</keyword>
<keyword id="KW-0349">Heme</keyword>
<keyword id="KW-0408">Iron</keyword>
<keyword id="KW-0479">Metal-binding</keyword>
<keyword id="KW-0500">Molybdenum</keyword>
<keyword id="KW-0520">NAD</keyword>
<keyword id="KW-0534">Nitrate assimilation</keyword>
<keyword id="KW-0560">Oxidoreductase</keyword>
<keyword id="KW-1185">Reference proteome</keyword>
<proteinExistence type="inferred from homology"/>
<gene>
    <name type="primary">NIA</name>
</gene>
<evidence type="ECO:0000250" key="1"/>
<evidence type="ECO:0000250" key="2">
    <source>
        <dbReference type="UniProtKB" id="A0A286R227"/>
    </source>
</evidence>
<evidence type="ECO:0000250" key="3">
    <source>
        <dbReference type="UniProtKB" id="P17571"/>
    </source>
</evidence>
<evidence type="ECO:0000250" key="4">
    <source>
        <dbReference type="UniProtKB" id="P49050"/>
    </source>
</evidence>
<evidence type="ECO:0000255" key="5"/>
<evidence type="ECO:0000255" key="6">
    <source>
        <dbReference type="PROSITE-ProRule" id="PRU00279"/>
    </source>
</evidence>
<evidence type="ECO:0000255" key="7">
    <source>
        <dbReference type="PROSITE-ProRule" id="PRU00716"/>
    </source>
</evidence>
<evidence type="ECO:0000256" key="8">
    <source>
        <dbReference type="SAM" id="MobiDB-lite"/>
    </source>
</evidence>
<evidence type="ECO:0000305" key="9"/>
<name>NIA_SOLLC</name>
<comment type="function">
    <text>Nitrate reductase is a key enzyme involved in the first step of nitrate assimilation in plants, fungi and bacteria.</text>
</comment>
<comment type="catalytic activity">
    <reaction>
        <text>nitrite + NAD(+) + H2O = nitrate + NADH + H(+)</text>
        <dbReference type="Rhea" id="RHEA:17913"/>
        <dbReference type="ChEBI" id="CHEBI:15377"/>
        <dbReference type="ChEBI" id="CHEBI:15378"/>
        <dbReference type="ChEBI" id="CHEBI:16301"/>
        <dbReference type="ChEBI" id="CHEBI:17632"/>
        <dbReference type="ChEBI" id="CHEBI:57540"/>
        <dbReference type="ChEBI" id="CHEBI:57945"/>
        <dbReference type="EC" id="1.7.1.1"/>
    </reaction>
</comment>
<comment type="cofactor">
    <cofactor evidence="1">
        <name>FAD</name>
        <dbReference type="ChEBI" id="CHEBI:57692"/>
    </cofactor>
    <text evidence="1">Binds 1 FAD.</text>
</comment>
<comment type="cofactor">
    <cofactor evidence="1">
        <name>heme</name>
        <dbReference type="ChEBI" id="CHEBI:30413"/>
    </cofactor>
    <text evidence="1">Binds 1 heme group. The heme group is called cytochrome b-557.</text>
</comment>
<comment type="cofactor">
    <cofactor evidence="1">
        <name>Mo-molybdopterin</name>
        <dbReference type="ChEBI" id="CHEBI:71302"/>
    </cofactor>
    <text evidence="1">Binds 1 Mo-molybdopterin (Mo-MPT) cofactor per subunit.</text>
</comment>
<comment type="subunit">
    <text>Homodimer.</text>
</comment>
<comment type="similarity">
    <text evidence="9">Belongs to the nitrate reductase family.</text>
</comment>